<name>PYRB_EHRCJ</name>
<comment type="function">
    <text evidence="1">Catalyzes the condensation of carbamoyl phosphate and aspartate to form carbamoyl aspartate and inorganic phosphate, the committed step in the de novo pyrimidine nucleotide biosynthesis pathway.</text>
</comment>
<comment type="catalytic activity">
    <reaction evidence="1">
        <text>carbamoyl phosphate + L-aspartate = N-carbamoyl-L-aspartate + phosphate + H(+)</text>
        <dbReference type="Rhea" id="RHEA:20013"/>
        <dbReference type="ChEBI" id="CHEBI:15378"/>
        <dbReference type="ChEBI" id="CHEBI:29991"/>
        <dbReference type="ChEBI" id="CHEBI:32814"/>
        <dbReference type="ChEBI" id="CHEBI:43474"/>
        <dbReference type="ChEBI" id="CHEBI:58228"/>
        <dbReference type="EC" id="2.1.3.2"/>
    </reaction>
</comment>
<comment type="pathway">
    <text evidence="1">Pyrimidine metabolism; UMP biosynthesis via de novo pathway; (S)-dihydroorotate from bicarbonate: step 2/3.</text>
</comment>
<comment type="subunit">
    <text evidence="1">Heterododecamer (2C3:3R2) of six catalytic PyrB chains organized as two trimers (C3), and six regulatory PyrI chains organized as three dimers (R2).</text>
</comment>
<comment type="similarity">
    <text evidence="1">Belongs to the aspartate/ornithine carbamoyltransferase superfamily. ATCase family.</text>
</comment>
<evidence type="ECO:0000255" key="1">
    <source>
        <dbReference type="HAMAP-Rule" id="MF_00001"/>
    </source>
</evidence>
<accession>Q3YS44</accession>
<feature type="chain" id="PRO_0000301570" description="Aspartate carbamoyltransferase catalytic subunit">
    <location>
        <begin position="1"/>
        <end position="305"/>
    </location>
</feature>
<feature type="binding site" evidence="1">
    <location>
        <position position="51"/>
    </location>
    <ligand>
        <name>carbamoyl phosphate</name>
        <dbReference type="ChEBI" id="CHEBI:58228"/>
    </ligand>
</feature>
<feature type="binding site" evidence="1">
    <location>
        <position position="52"/>
    </location>
    <ligand>
        <name>carbamoyl phosphate</name>
        <dbReference type="ChEBI" id="CHEBI:58228"/>
    </ligand>
</feature>
<feature type="binding site" evidence="1">
    <location>
        <position position="79"/>
    </location>
    <ligand>
        <name>L-aspartate</name>
        <dbReference type="ChEBI" id="CHEBI:29991"/>
    </ligand>
</feature>
<feature type="binding site" evidence="1">
    <location>
        <position position="101"/>
    </location>
    <ligand>
        <name>carbamoyl phosphate</name>
        <dbReference type="ChEBI" id="CHEBI:58228"/>
    </ligand>
</feature>
<feature type="binding site" evidence="1">
    <location>
        <position position="130"/>
    </location>
    <ligand>
        <name>carbamoyl phosphate</name>
        <dbReference type="ChEBI" id="CHEBI:58228"/>
    </ligand>
</feature>
<feature type="binding site" evidence="1">
    <location>
        <position position="133"/>
    </location>
    <ligand>
        <name>carbamoyl phosphate</name>
        <dbReference type="ChEBI" id="CHEBI:58228"/>
    </ligand>
</feature>
<feature type="binding site" evidence="1">
    <location>
        <position position="163"/>
    </location>
    <ligand>
        <name>L-aspartate</name>
        <dbReference type="ChEBI" id="CHEBI:29991"/>
    </ligand>
</feature>
<feature type="binding site" evidence="1">
    <location>
        <position position="215"/>
    </location>
    <ligand>
        <name>L-aspartate</name>
        <dbReference type="ChEBI" id="CHEBI:29991"/>
    </ligand>
</feature>
<feature type="binding site" evidence="1">
    <location>
        <position position="256"/>
    </location>
    <ligand>
        <name>carbamoyl phosphate</name>
        <dbReference type="ChEBI" id="CHEBI:58228"/>
    </ligand>
</feature>
<feature type="binding site" evidence="1">
    <location>
        <position position="257"/>
    </location>
    <ligand>
        <name>carbamoyl phosphate</name>
        <dbReference type="ChEBI" id="CHEBI:58228"/>
    </ligand>
</feature>
<gene>
    <name evidence="1" type="primary">pyrB</name>
    <name type="ordered locus">Ecaj_0418</name>
</gene>
<proteinExistence type="inferred from homology"/>
<dbReference type="EC" id="2.1.3.2" evidence="1"/>
<dbReference type="EMBL" id="CP000107">
    <property type="protein sequence ID" value="AAZ68461.1"/>
    <property type="molecule type" value="Genomic_DNA"/>
</dbReference>
<dbReference type="RefSeq" id="WP_011304539.1">
    <property type="nucleotide sequence ID" value="NC_007354.1"/>
</dbReference>
<dbReference type="SMR" id="Q3YS44"/>
<dbReference type="FunCoup" id="Q3YS44">
    <property type="interactions" value="340"/>
</dbReference>
<dbReference type="STRING" id="269484.Ecaj_0418"/>
<dbReference type="KEGG" id="ecn:Ecaj_0418"/>
<dbReference type="eggNOG" id="COG0540">
    <property type="taxonomic scope" value="Bacteria"/>
</dbReference>
<dbReference type="HOGENOM" id="CLU_043846_2_0_5"/>
<dbReference type="InParanoid" id="Q3YS44"/>
<dbReference type="UniPathway" id="UPA00070">
    <property type="reaction ID" value="UER00116"/>
</dbReference>
<dbReference type="Proteomes" id="UP000000435">
    <property type="component" value="Chromosome"/>
</dbReference>
<dbReference type="GO" id="GO:0005829">
    <property type="term" value="C:cytosol"/>
    <property type="evidence" value="ECO:0007669"/>
    <property type="project" value="TreeGrafter"/>
</dbReference>
<dbReference type="GO" id="GO:0016597">
    <property type="term" value="F:amino acid binding"/>
    <property type="evidence" value="ECO:0007669"/>
    <property type="project" value="InterPro"/>
</dbReference>
<dbReference type="GO" id="GO:0004070">
    <property type="term" value="F:aspartate carbamoyltransferase activity"/>
    <property type="evidence" value="ECO:0007669"/>
    <property type="project" value="UniProtKB-UniRule"/>
</dbReference>
<dbReference type="GO" id="GO:0006207">
    <property type="term" value="P:'de novo' pyrimidine nucleobase biosynthetic process"/>
    <property type="evidence" value="ECO:0007669"/>
    <property type="project" value="InterPro"/>
</dbReference>
<dbReference type="GO" id="GO:0044205">
    <property type="term" value="P:'de novo' UMP biosynthetic process"/>
    <property type="evidence" value="ECO:0007669"/>
    <property type="project" value="UniProtKB-UniRule"/>
</dbReference>
<dbReference type="GO" id="GO:0006520">
    <property type="term" value="P:amino acid metabolic process"/>
    <property type="evidence" value="ECO:0007669"/>
    <property type="project" value="InterPro"/>
</dbReference>
<dbReference type="Gene3D" id="3.40.50.1370">
    <property type="entry name" value="Aspartate/ornithine carbamoyltransferase"/>
    <property type="match status" value="2"/>
</dbReference>
<dbReference type="HAMAP" id="MF_00001">
    <property type="entry name" value="Asp_carb_tr"/>
    <property type="match status" value="1"/>
</dbReference>
<dbReference type="InterPro" id="IPR006132">
    <property type="entry name" value="Asp/Orn_carbamoyltranf_P-bd"/>
</dbReference>
<dbReference type="InterPro" id="IPR006130">
    <property type="entry name" value="Asp/Orn_carbamoylTrfase"/>
</dbReference>
<dbReference type="InterPro" id="IPR036901">
    <property type="entry name" value="Asp/Orn_carbamoylTrfase_sf"/>
</dbReference>
<dbReference type="InterPro" id="IPR002082">
    <property type="entry name" value="Asp_carbamoyltransf"/>
</dbReference>
<dbReference type="InterPro" id="IPR006131">
    <property type="entry name" value="Asp_carbamoyltransf_Asp/Orn-bd"/>
</dbReference>
<dbReference type="NCBIfam" id="TIGR00670">
    <property type="entry name" value="asp_carb_tr"/>
    <property type="match status" value="1"/>
</dbReference>
<dbReference type="NCBIfam" id="NF002032">
    <property type="entry name" value="PRK00856.1"/>
    <property type="match status" value="1"/>
</dbReference>
<dbReference type="PANTHER" id="PTHR45753:SF6">
    <property type="entry name" value="ASPARTATE CARBAMOYLTRANSFERASE"/>
    <property type="match status" value="1"/>
</dbReference>
<dbReference type="PANTHER" id="PTHR45753">
    <property type="entry name" value="ORNITHINE CARBAMOYLTRANSFERASE, MITOCHONDRIAL"/>
    <property type="match status" value="1"/>
</dbReference>
<dbReference type="Pfam" id="PF00185">
    <property type="entry name" value="OTCace"/>
    <property type="match status" value="1"/>
</dbReference>
<dbReference type="Pfam" id="PF02729">
    <property type="entry name" value="OTCace_N"/>
    <property type="match status" value="1"/>
</dbReference>
<dbReference type="PRINTS" id="PR00100">
    <property type="entry name" value="AOTCASE"/>
</dbReference>
<dbReference type="PRINTS" id="PR00101">
    <property type="entry name" value="ATCASE"/>
</dbReference>
<dbReference type="SUPFAM" id="SSF53671">
    <property type="entry name" value="Aspartate/ornithine carbamoyltransferase"/>
    <property type="match status" value="1"/>
</dbReference>
<dbReference type="PROSITE" id="PS00097">
    <property type="entry name" value="CARBAMOYLTRANSFERASE"/>
    <property type="match status" value="1"/>
</dbReference>
<organism>
    <name type="scientific">Ehrlichia canis (strain Jake)</name>
    <dbReference type="NCBI Taxonomy" id="269484"/>
    <lineage>
        <taxon>Bacteria</taxon>
        <taxon>Pseudomonadati</taxon>
        <taxon>Pseudomonadota</taxon>
        <taxon>Alphaproteobacteria</taxon>
        <taxon>Rickettsiales</taxon>
        <taxon>Anaplasmataceae</taxon>
        <taxon>Ehrlichia</taxon>
    </lineage>
</organism>
<keyword id="KW-0665">Pyrimidine biosynthesis</keyword>
<keyword id="KW-0808">Transferase</keyword>
<sequence>MNTLLEISSLTPDDIESIFNITMQYFNNRSQNNKILNGKVVVNLFFESSTRTLSSFEIAEKSLGAHSITLNINTSSINKGESIIDTILNINAMNPDLIIIRSQYSQLVKTISQYVSNCCIINAGDGNHEHPTQALIDYCTIRYLKKNISNLNISICGDILHSRVARSNIRLLSRYGANISLIAPPTLACDLVGVSHIYHNLIDGIRDADVIMLLRLQKERITNCVIPSEEEYSHLYMLNSERLSYAKKDVIIMHPGPTNKGTEISNNVAENKSVILLQVKMGVAVRKAILHYLLYGNKCNTSNEI</sequence>
<protein>
    <recommendedName>
        <fullName evidence="1">Aspartate carbamoyltransferase catalytic subunit</fullName>
        <ecNumber evidence="1">2.1.3.2</ecNumber>
    </recommendedName>
    <alternativeName>
        <fullName evidence="1">Aspartate transcarbamylase</fullName>
        <shortName evidence="1">ATCase</shortName>
    </alternativeName>
</protein>
<reference key="1">
    <citation type="journal article" date="2006" name="J. Bacteriol.">
        <title>The genome of the obligately intracellular bacterium Ehrlichia canis reveals themes of complex membrane structure and immune evasion strategies.</title>
        <authorList>
            <person name="Mavromatis K."/>
            <person name="Doyle C.K."/>
            <person name="Lykidis A."/>
            <person name="Ivanova N."/>
            <person name="Francino M.P."/>
            <person name="Chain P."/>
            <person name="Shin M."/>
            <person name="Malfatti S."/>
            <person name="Larimer F."/>
            <person name="Copeland A."/>
            <person name="Detter J.C."/>
            <person name="Land M."/>
            <person name="Richardson P.M."/>
            <person name="Yu X.J."/>
            <person name="Walker D.H."/>
            <person name="McBride J.W."/>
            <person name="Kyrpides N.C."/>
        </authorList>
    </citation>
    <scope>NUCLEOTIDE SEQUENCE [LARGE SCALE GENOMIC DNA]</scope>
    <source>
        <strain>Jake</strain>
    </source>
</reference>